<comment type="function">
    <text evidence="9">Involved in an anaerobic respiration pathway that converts the sulfonate isethionate (2-hydroxyethanesulfonate) to ammonia, acetate and sulfide. Catalyzes activation of the isethionate sulfite-lyase IslA under anaerobic conditions by generation of an organic free radical on a glycine residue, via a homolytic cleavage of S-adenosyl-L-methionine (SAM).</text>
</comment>
<comment type="catalytic activity">
    <reaction evidence="1 9">
        <text>glycyl-[protein] + reduced [flavodoxin] + S-adenosyl-L-methionine = glycin-2-yl radical-[protein] + semiquinone [flavodoxin] + 5'-deoxyadenosine + L-methionine + H(+)</text>
        <dbReference type="Rhea" id="RHEA:61976"/>
        <dbReference type="Rhea" id="RHEA-COMP:10622"/>
        <dbReference type="Rhea" id="RHEA-COMP:14480"/>
        <dbReference type="Rhea" id="RHEA-COMP:15993"/>
        <dbReference type="Rhea" id="RHEA-COMP:15994"/>
        <dbReference type="ChEBI" id="CHEBI:15378"/>
        <dbReference type="ChEBI" id="CHEBI:17319"/>
        <dbReference type="ChEBI" id="CHEBI:29947"/>
        <dbReference type="ChEBI" id="CHEBI:32722"/>
        <dbReference type="ChEBI" id="CHEBI:57618"/>
        <dbReference type="ChEBI" id="CHEBI:57844"/>
        <dbReference type="ChEBI" id="CHEBI:59789"/>
        <dbReference type="ChEBI" id="CHEBI:140311"/>
    </reaction>
    <physiologicalReaction direction="left-to-right" evidence="9">
        <dbReference type="Rhea" id="RHEA:61977"/>
    </physiologicalReaction>
</comment>
<comment type="cofactor">
    <cofactor evidence="4">
        <name>[4Fe-4S] cluster</name>
        <dbReference type="ChEBI" id="CHEBI:49883"/>
    </cofactor>
    <text evidence="4">Binds 3 [4Fe-4S] clusters. One cluster is coordinated with 3 cysteines and an exchangeable S-adenosyl-L-methionine.</text>
</comment>
<comment type="pathway">
    <text evidence="6">Organosulfur degradation; alkanesulfonate degradation.</text>
</comment>
<comment type="subunit">
    <text evidence="3">Monomer.</text>
</comment>
<comment type="induction">
    <text evidence="6">Highly up-regulated in the presence of isethionate.</text>
</comment>
<comment type="disruption phenotype">
    <text evidence="6">Cells lacking this gene lose the ability to grow with isethionate as the terminal electron acceptor.</text>
</comment>
<comment type="similarity">
    <text evidence="8">Belongs to the organic radical-activating enzymes family.</text>
</comment>
<proteinExistence type="evidence at transcript level"/>
<gene>
    <name evidence="7" type="primary">islB</name>
    <name evidence="10" type="ordered locus">Dde_1272</name>
</gene>
<sequence length="309" mass="34567">MSSFEDKKTTGITFNIQKYSVHDGPGIRTVVFLKGCPLRCRWCSNPESQRRRIELAYNTGRCLTLTKCVRCVEVCTMNAITRADDDTISIDRALCEECGMFCAEACPSKALITYGTTRTVDEVLNVVEQDSVFYARSGGGITLSGGEPFAQPAFALALLREARRRHIHTAVETCGYASWSDMEPALEYVKFVHYDIKSLDDEKHRSATGVSNVRIIENLRNIRSRFPALKVVVRTPVIPGFNDTEEDIRAIARLTAELEVEYQLLPYHRLGTQKYTFLDRQAPMGEVVLDEQVMTALNAVVAAEHATDG</sequence>
<reference key="1">
    <citation type="journal article" date="2011" name="J. Bacteriol.">
        <title>Complete genome sequence and updated annotation of Desulfovibrio alaskensis G20.</title>
        <authorList>
            <person name="Hauser L.J."/>
            <person name="Land M.L."/>
            <person name="Brown S.D."/>
            <person name="Larimer F."/>
            <person name="Keller K.L."/>
            <person name="Rapp-Giles B.J."/>
            <person name="Price M.N."/>
            <person name="Lin M."/>
            <person name="Bruce D.C."/>
            <person name="Detter J.C."/>
            <person name="Tapia R."/>
            <person name="Han C.S."/>
            <person name="Goodwin L.A."/>
            <person name="Cheng J.F."/>
            <person name="Pitluck S."/>
            <person name="Copeland A."/>
            <person name="Lucas S."/>
            <person name="Nolan M."/>
            <person name="Lapidus A.L."/>
            <person name="Palumbo A.V."/>
            <person name="Wall J.D."/>
        </authorList>
    </citation>
    <scope>NUCLEOTIDE SEQUENCE [LARGE SCALE GENOMIC DNA]</scope>
    <source>
        <strain>ATCC BAA-1058 / DSM 17464 / G20</strain>
    </source>
</reference>
<reference key="2">
    <citation type="journal article" date="2019" name="Proc. Natl. Acad. Sci. U.S.A.">
        <title>A glycyl radical enzyme enables hydrogen sulfide production by the human intestinal bacterium Bilophila wadsworthia.</title>
        <authorList>
            <person name="Peck S.C."/>
            <person name="Denger K."/>
            <person name="Burrichter A."/>
            <person name="Irwin S.M."/>
            <person name="Balskus E.P."/>
            <person name="Schleheck D."/>
        </authorList>
    </citation>
    <scope>FUNCTION</scope>
    <scope>INDUCTION</scope>
    <scope>PATHWAY</scope>
    <scope>DISRUPTION PHENOTYPE</scope>
    <source>
        <strain>ATCC BAA-1058 / DSM 17464 / G20</strain>
    </source>
</reference>
<name>ISLB_OLEA2</name>
<evidence type="ECO:0000250" key="1">
    <source>
        <dbReference type="UniProtKB" id="B8J0R0"/>
    </source>
</evidence>
<evidence type="ECO:0000250" key="2">
    <source>
        <dbReference type="UniProtKB" id="P0A9N4"/>
    </source>
</evidence>
<evidence type="ECO:0000250" key="3">
    <source>
        <dbReference type="UniProtKB" id="Q30W71"/>
    </source>
</evidence>
<evidence type="ECO:0000255" key="4">
    <source>
        <dbReference type="PROSITE-ProRule" id="PRU00711"/>
    </source>
</evidence>
<evidence type="ECO:0000255" key="5">
    <source>
        <dbReference type="PROSITE-ProRule" id="PRU01266"/>
    </source>
</evidence>
<evidence type="ECO:0000269" key="6">
    <source>
    </source>
</evidence>
<evidence type="ECO:0000303" key="7">
    <source>
    </source>
</evidence>
<evidence type="ECO:0000305" key="8"/>
<evidence type="ECO:0000305" key="9">
    <source>
    </source>
</evidence>
<evidence type="ECO:0000312" key="10">
    <source>
        <dbReference type="EMBL" id="ABB38073.1"/>
    </source>
</evidence>
<protein>
    <recommendedName>
        <fullName evidence="9">Isethionate sulfite-lyase activating enzyme</fullName>
        <ecNumber evidence="1 9">1.97.1.-</ecNumber>
    </recommendedName>
    <alternativeName>
        <fullName evidence="7">GRE activase IslB</fullName>
    </alternativeName>
    <alternativeName>
        <fullName>Glycyl-radical enzyme activating enzyme IslB</fullName>
    </alternativeName>
</protein>
<keyword id="KW-0004">4Fe-4S</keyword>
<keyword id="KW-0408">Iron</keyword>
<keyword id="KW-0411">Iron-sulfur</keyword>
<keyword id="KW-0479">Metal-binding</keyword>
<keyword id="KW-0560">Oxidoreductase</keyword>
<keyword id="KW-1185">Reference proteome</keyword>
<keyword id="KW-0949">S-adenosyl-L-methionine</keyword>
<accession>Q312S3</accession>
<dbReference type="EC" id="1.97.1.-" evidence="1 9"/>
<dbReference type="EMBL" id="CP000112">
    <property type="protein sequence ID" value="ABB38073.1"/>
    <property type="molecule type" value="Genomic_DNA"/>
</dbReference>
<dbReference type="RefSeq" id="WP_011367271.1">
    <property type="nucleotide sequence ID" value="NC_007519.1"/>
</dbReference>
<dbReference type="SMR" id="Q312S3"/>
<dbReference type="STRING" id="207559.Dde_1272"/>
<dbReference type="KEGG" id="dde:Dde_1272"/>
<dbReference type="eggNOG" id="COG1180">
    <property type="taxonomic scope" value="Bacteria"/>
</dbReference>
<dbReference type="HOGENOM" id="CLU_058969_0_0_7"/>
<dbReference type="UniPathway" id="UPA00338"/>
<dbReference type="Proteomes" id="UP000002710">
    <property type="component" value="Chromosome"/>
</dbReference>
<dbReference type="GO" id="GO:0051539">
    <property type="term" value="F:4 iron, 4 sulfur cluster binding"/>
    <property type="evidence" value="ECO:0007669"/>
    <property type="project" value="UniProtKB-KW"/>
</dbReference>
<dbReference type="GO" id="GO:0046872">
    <property type="term" value="F:metal ion binding"/>
    <property type="evidence" value="ECO:0007669"/>
    <property type="project" value="UniProtKB-KW"/>
</dbReference>
<dbReference type="GO" id="GO:0016491">
    <property type="term" value="F:oxidoreductase activity"/>
    <property type="evidence" value="ECO:0007669"/>
    <property type="project" value="UniProtKB-KW"/>
</dbReference>
<dbReference type="GO" id="GO:0046306">
    <property type="term" value="P:alkanesulfonate catabolic process"/>
    <property type="evidence" value="ECO:0007669"/>
    <property type="project" value="UniProtKB-UniPathway"/>
</dbReference>
<dbReference type="CDD" id="cd01335">
    <property type="entry name" value="Radical_SAM"/>
    <property type="match status" value="1"/>
</dbReference>
<dbReference type="Gene3D" id="3.30.70.20">
    <property type="match status" value="1"/>
</dbReference>
<dbReference type="Gene3D" id="3.20.20.70">
    <property type="entry name" value="Aldolase class I"/>
    <property type="match status" value="1"/>
</dbReference>
<dbReference type="InterPro" id="IPR017896">
    <property type="entry name" value="4Fe4S_Fe-S-bd"/>
</dbReference>
<dbReference type="InterPro" id="IPR013785">
    <property type="entry name" value="Aldolase_TIM"/>
</dbReference>
<dbReference type="InterPro" id="IPR040074">
    <property type="entry name" value="BssD/PflA/YjjW"/>
</dbReference>
<dbReference type="InterPro" id="IPR034457">
    <property type="entry name" value="Organic_radical-activating"/>
</dbReference>
<dbReference type="InterPro" id="IPR012839">
    <property type="entry name" value="Organic_radical_activase"/>
</dbReference>
<dbReference type="InterPro" id="IPR001989">
    <property type="entry name" value="Radical_activat_CS"/>
</dbReference>
<dbReference type="InterPro" id="IPR007197">
    <property type="entry name" value="rSAM"/>
</dbReference>
<dbReference type="NCBIfam" id="TIGR02494">
    <property type="entry name" value="PFLE_PFLC"/>
    <property type="match status" value="1"/>
</dbReference>
<dbReference type="PANTHER" id="PTHR30352:SF4">
    <property type="entry name" value="PYRUVATE FORMATE-LYASE 2-ACTIVATING ENZYME"/>
    <property type="match status" value="1"/>
</dbReference>
<dbReference type="PANTHER" id="PTHR30352">
    <property type="entry name" value="PYRUVATE FORMATE-LYASE-ACTIVATING ENZYME"/>
    <property type="match status" value="1"/>
</dbReference>
<dbReference type="Pfam" id="PF13353">
    <property type="entry name" value="Fer4_12"/>
    <property type="match status" value="2"/>
</dbReference>
<dbReference type="Pfam" id="PF04055">
    <property type="entry name" value="Radical_SAM"/>
    <property type="match status" value="1"/>
</dbReference>
<dbReference type="PIRSF" id="PIRSF000371">
    <property type="entry name" value="PFL_act_enz"/>
    <property type="match status" value="1"/>
</dbReference>
<dbReference type="SFLD" id="SFLDG01118">
    <property type="entry name" value="activating_enzymes__group_2"/>
    <property type="match status" value="1"/>
</dbReference>
<dbReference type="SFLD" id="SFLDS00029">
    <property type="entry name" value="Radical_SAM"/>
    <property type="match status" value="1"/>
</dbReference>
<dbReference type="SUPFAM" id="SSF54862">
    <property type="entry name" value="4Fe-4S ferredoxins"/>
    <property type="match status" value="1"/>
</dbReference>
<dbReference type="SUPFAM" id="SSF102114">
    <property type="entry name" value="Radical SAM enzymes"/>
    <property type="match status" value="1"/>
</dbReference>
<dbReference type="PROSITE" id="PS51379">
    <property type="entry name" value="4FE4S_FER_2"/>
    <property type="match status" value="2"/>
</dbReference>
<dbReference type="PROSITE" id="PS01087">
    <property type="entry name" value="RADICAL_ACTIVATING"/>
    <property type="match status" value="1"/>
</dbReference>
<dbReference type="PROSITE" id="PS51918">
    <property type="entry name" value="RADICAL_SAM"/>
    <property type="match status" value="1"/>
</dbReference>
<organism>
    <name type="scientific">Oleidesulfovibrio alaskensis (strain ATCC BAA-1058 / DSM 17464 / G20)</name>
    <name type="common">Desulfovibrio alaskensis</name>
    <dbReference type="NCBI Taxonomy" id="207559"/>
    <lineage>
        <taxon>Bacteria</taxon>
        <taxon>Pseudomonadati</taxon>
        <taxon>Thermodesulfobacteriota</taxon>
        <taxon>Desulfovibrionia</taxon>
        <taxon>Desulfovibrionales</taxon>
        <taxon>Desulfovibrionaceae</taxon>
        <taxon>Oleidesulfovibrio</taxon>
    </lineage>
</organism>
<feature type="chain" id="PRO_0000450946" description="Isethionate sulfite-lyase activating enzyme">
    <location>
        <begin position="1"/>
        <end position="309"/>
    </location>
</feature>
<feature type="domain" description="Radical SAM core" evidence="5">
    <location>
        <begin position="22"/>
        <end position="309"/>
    </location>
</feature>
<feature type="domain" description="4Fe-4S ferredoxin-type 1" evidence="4">
    <location>
        <begin position="53"/>
        <end position="85"/>
    </location>
</feature>
<feature type="domain" description="4Fe-4S ferredoxin-type 2" evidence="4">
    <location>
        <begin position="86"/>
        <end position="117"/>
    </location>
</feature>
<feature type="binding site" evidence="5">
    <location>
        <position position="36"/>
    </location>
    <ligand>
        <name>[4Fe-4S] cluster</name>
        <dbReference type="ChEBI" id="CHEBI:49883"/>
        <label>1</label>
        <note>4Fe-4S-S-AdoMet</note>
    </ligand>
</feature>
<feature type="binding site" evidence="5">
    <location>
        <position position="40"/>
    </location>
    <ligand>
        <name>[4Fe-4S] cluster</name>
        <dbReference type="ChEBI" id="CHEBI:49883"/>
        <label>1</label>
        <note>4Fe-4S-S-AdoMet</note>
    </ligand>
</feature>
<feature type="binding site" evidence="2">
    <location>
        <begin position="42"/>
        <end position="44"/>
    </location>
    <ligand>
        <name>S-adenosyl-L-methionine</name>
        <dbReference type="ChEBI" id="CHEBI:59789"/>
    </ligand>
</feature>
<feature type="binding site" evidence="5">
    <location>
        <position position="43"/>
    </location>
    <ligand>
        <name>[4Fe-4S] cluster</name>
        <dbReference type="ChEBI" id="CHEBI:49883"/>
        <label>1</label>
        <note>4Fe-4S-S-AdoMet</note>
    </ligand>
</feature>
<feature type="binding site" evidence="4">
    <location>
        <position position="62"/>
    </location>
    <ligand>
        <name>[4Fe-4S] cluster</name>
        <dbReference type="ChEBI" id="CHEBI:49883"/>
        <label>2</label>
    </ligand>
</feature>
<feature type="binding site" evidence="4">
    <location>
        <position position="68"/>
    </location>
    <ligand>
        <name>[4Fe-4S] cluster</name>
        <dbReference type="ChEBI" id="CHEBI:49883"/>
        <label>2</label>
    </ligand>
</feature>
<feature type="binding site" evidence="4">
    <location>
        <position position="71"/>
    </location>
    <ligand>
        <name>[4Fe-4S] cluster</name>
        <dbReference type="ChEBI" id="CHEBI:49883"/>
        <label>2</label>
    </ligand>
</feature>
<feature type="binding site" evidence="4">
    <location>
        <position position="75"/>
    </location>
    <ligand>
        <name>[4Fe-4S] cluster</name>
        <dbReference type="ChEBI" id="CHEBI:49883"/>
        <label>3</label>
    </ligand>
</feature>
<feature type="binding site" evidence="4">
    <location>
        <position position="95"/>
    </location>
    <ligand>
        <name>[4Fe-4S] cluster</name>
        <dbReference type="ChEBI" id="CHEBI:49883"/>
        <label>3</label>
    </ligand>
</feature>
<feature type="binding site" evidence="4">
    <location>
        <position position="98"/>
    </location>
    <ligand>
        <name>[4Fe-4S] cluster</name>
        <dbReference type="ChEBI" id="CHEBI:49883"/>
        <label>3</label>
    </ligand>
</feature>
<feature type="binding site" evidence="4">
    <location>
        <position position="102"/>
    </location>
    <ligand>
        <name>[4Fe-4S] cluster</name>
        <dbReference type="ChEBI" id="CHEBI:49883"/>
        <label>3</label>
    </ligand>
</feature>
<feature type="binding site" evidence="4">
    <location>
        <position position="106"/>
    </location>
    <ligand>
        <name>[4Fe-4S] cluster</name>
        <dbReference type="ChEBI" id="CHEBI:49883"/>
        <label>2</label>
    </ligand>
</feature>
<feature type="binding site" evidence="2">
    <location>
        <position position="146"/>
    </location>
    <ligand>
        <name>S-adenosyl-L-methionine</name>
        <dbReference type="ChEBI" id="CHEBI:59789"/>
    </ligand>
</feature>
<feature type="binding site" evidence="2">
    <location>
        <begin position="195"/>
        <end position="197"/>
    </location>
    <ligand>
        <name>S-adenosyl-L-methionine</name>
        <dbReference type="ChEBI" id="CHEBI:59789"/>
    </ligand>
</feature>
<feature type="binding site" evidence="2">
    <location>
        <position position="268"/>
    </location>
    <ligand>
        <name>S-adenosyl-L-methionine</name>
        <dbReference type="ChEBI" id="CHEBI:59789"/>
    </ligand>
</feature>